<gene>
    <name type="primary">XRCC2</name>
    <name type="ordered locus">At5g64520</name>
    <name type="ORF">T12B11.11</name>
</gene>
<comment type="function">
    <text evidence="1">Involved in the homologous recombination repair (HRR) pathway of double-stranded DNA, thought to repair chromosomal fragmentation, translocations and deletions.</text>
</comment>
<comment type="subcellular location">
    <subcellularLocation>
        <location evidence="1">Nucleus</location>
    </subcellularLocation>
</comment>
<comment type="alternative products">
    <event type="alternative splicing"/>
    <isoform>
        <id>Q682D3-1</id>
        <name>1</name>
        <name>alpha</name>
        <sequence type="displayed"/>
    </isoform>
    <isoform>
        <id>Q682D3-2</id>
        <name>2</name>
        <name>beta</name>
        <sequence type="described" ref="VSP_011866 VSP_011867 VSP_011868"/>
    </isoform>
</comment>
<comment type="similarity">
    <text evidence="3">Belongs to the RecA family. RAD51 subfamily.</text>
</comment>
<comment type="sequence caution" evidence="3">
    <conflict type="erroneous gene model prediction">
        <sequence resource="EMBL-CDS" id="BAB11419"/>
    </conflict>
</comment>
<protein>
    <recommendedName>
        <fullName>DNA repair protein XRCC2 homolog</fullName>
    </recommendedName>
    <alternativeName>
        <fullName>X-ray repair cross-complementing protein 2 homolog</fullName>
        <shortName>AtXRCC2</shortName>
    </alternativeName>
</protein>
<feature type="chain" id="PRO_0000122950" description="DNA repair protein XRCC2 homolog">
    <location>
        <begin position="1"/>
        <end position="372"/>
    </location>
</feature>
<feature type="splice variant" id="VSP_011866" description="In isoform 2." evidence="2">
    <original>K</original>
    <variation>KYFTVLQ</variation>
    <location>
        <position position="168"/>
    </location>
</feature>
<feature type="splice variant" id="VSP_011867" description="In isoform 2." evidence="2">
    <original>KVSSNDHFSGNVASKAQQPPFREFMPSSWQA</original>
    <variation>SPQTTIFQGMLQVKLSNLHFVNSCLLLGRHL</variation>
    <location>
        <begin position="259"/>
        <end position="289"/>
    </location>
</feature>
<feature type="splice variant" id="VSP_011868" description="In isoform 2." evidence="2">
    <location>
        <begin position="290"/>
        <end position="372"/>
    </location>
</feature>
<evidence type="ECO:0000250" key="1"/>
<evidence type="ECO:0000303" key="2">
    <source>
    </source>
</evidence>
<evidence type="ECO:0000305" key="3"/>
<dbReference type="EMBL" id="AJ421043">
    <property type="protein sequence ID" value="CAD12880.1"/>
    <property type="molecule type" value="mRNA"/>
</dbReference>
<dbReference type="EMBL" id="AB010076">
    <property type="protein sequence ID" value="BAB11419.1"/>
    <property type="status" value="ALT_SEQ"/>
    <property type="molecule type" value="Genomic_DNA"/>
</dbReference>
<dbReference type="EMBL" id="CP002688">
    <property type="protein sequence ID" value="AED97911.1"/>
    <property type="molecule type" value="Genomic_DNA"/>
</dbReference>
<dbReference type="EMBL" id="AK175434">
    <property type="protein sequence ID" value="BAD43197.1"/>
    <property type="molecule type" value="mRNA"/>
</dbReference>
<dbReference type="RefSeq" id="NP_851268.1">
    <molecule id="Q682D3-1"/>
    <property type="nucleotide sequence ID" value="NM_180937.2"/>
</dbReference>
<dbReference type="SMR" id="Q682D3"/>
<dbReference type="BioGRID" id="21815">
    <property type="interactions" value="1"/>
</dbReference>
<dbReference type="FunCoup" id="Q682D3">
    <property type="interactions" value="1811"/>
</dbReference>
<dbReference type="STRING" id="3702.Q682D3"/>
<dbReference type="iPTMnet" id="Q682D3"/>
<dbReference type="PaxDb" id="3702-AT5G64520.1"/>
<dbReference type="DNASU" id="836573"/>
<dbReference type="EnsemblPlants" id="AT5G64520.1">
    <molecule id="Q682D3-1"/>
    <property type="protein sequence ID" value="AT5G64520.1"/>
    <property type="gene ID" value="AT5G64520"/>
</dbReference>
<dbReference type="GeneID" id="836573"/>
<dbReference type="Gramene" id="AT5G64520.1">
    <molecule id="Q682D3-1"/>
    <property type="protein sequence ID" value="AT5G64520.1"/>
    <property type="gene ID" value="AT5G64520"/>
</dbReference>
<dbReference type="KEGG" id="ath:AT5G64520"/>
<dbReference type="Araport" id="AT5G64520"/>
<dbReference type="TAIR" id="AT5G64520">
    <property type="gene designation" value="XRCC2"/>
</dbReference>
<dbReference type="eggNOG" id="KOG2859">
    <property type="taxonomic scope" value="Eukaryota"/>
</dbReference>
<dbReference type="InParanoid" id="Q682D3"/>
<dbReference type="PhylomeDB" id="Q682D3"/>
<dbReference type="PRO" id="PR:Q682D3"/>
<dbReference type="Proteomes" id="UP000006548">
    <property type="component" value="Chromosome 5"/>
</dbReference>
<dbReference type="ExpressionAtlas" id="Q682D3">
    <property type="expression patterns" value="baseline and differential"/>
</dbReference>
<dbReference type="GO" id="GO:0033063">
    <property type="term" value="C:Rad51B-Rad51C-Rad51D-XRCC2 complex"/>
    <property type="evidence" value="ECO:0007669"/>
    <property type="project" value="InterPro"/>
</dbReference>
<dbReference type="GO" id="GO:0005657">
    <property type="term" value="C:replication fork"/>
    <property type="evidence" value="ECO:0007669"/>
    <property type="project" value="InterPro"/>
</dbReference>
<dbReference type="GO" id="GO:0005524">
    <property type="term" value="F:ATP binding"/>
    <property type="evidence" value="ECO:0007669"/>
    <property type="project" value="InterPro"/>
</dbReference>
<dbReference type="GO" id="GO:0140664">
    <property type="term" value="F:ATP-dependent DNA damage sensor activity"/>
    <property type="evidence" value="ECO:0007669"/>
    <property type="project" value="InterPro"/>
</dbReference>
<dbReference type="GO" id="GO:0003677">
    <property type="term" value="F:DNA binding"/>
    <property type="evidence" value="ECO:0007669"/>
    <property type="project" value="UniProtKB-KW"/>
</dbReference>
<dbReference type="GO" id="GO:0000724">
    <property type="term" value="P:double-strand break repair via homologous recombination"/>
    <property type="evidence" value="ECO:0000315"/>
    <property type="project" value="TAIR"/>
</dbReference>
<dbReference type="GO" id="GO:0007131">
    <property type="term" value="P:reciprocal meiotic recombination"/>
    <property type="evidence" value="ECO:0000315"/>
    <property type="project" value="TAIR"/>
</dbReference>
<dbReference type="CDD" id="cd19490">
    <property type="entry name" value="XRCC2"/>
    <property type="match status" value="1"/>
</dbReference>
<dbReference type="FunFam" id="3.40.50.300:FF:003575">
    <property type="entry name" value="Homolog of X-ray repair cross complementing 2 (XRCC2)"/>
    <property type="match status" value="1"/>
</dbReference>
<dbReference type="Gene3D" id="3.40.50.300">
    <property type="entry name" value="P-loop containing nucleotide triphosphate hydrolases"/>
    <property type="match status" value="1"/>
</dbReference>
<dbReference type="InterPro" id="IPR027417">
    <property type="entry name" value="P-loop_NTPase"/>
</dbReference>
<dbReference type="InterPro" id="IPR020588">
    <property type="entry name" value="RecA_ATP-bd"/>
</dbReference>
<dbReference type="InterPro" id="IPR030547">
    <property type="entry name" value="XRCC2"/>
</dbReference>
<dbReference type="PANTHER" id="PTHR46644">
    <property type="entry name" value="DNA REPAIR PROTEIN XRCC2"/>
    <property type="match status" value="1"/>
</dbReference>
<dbReference type="PANTHER" id="PTHR46644:SF2">
    <property type="entry name" value="DNA REPAIR PROTEIN XRCC2"/>
    <property type="match status" value="1"/>
</dbReference>
<dbReference type="SUPFAM" id="SSF52540">
    <property type="entry name" value="P-loop containing nucleoside triphosphate hydrolases"/>
    <property type="match status" value="1"/>
</dbReference>
<dbReference type="PROSITE" id="PS50162">
    <property type="entry name" value="RECA_2"/>
    <property type="match status" value="1"/>
</dbReference>
<reference key="1">
    <citation type="submission" date="2001-11" db="EMBL/GenBank/DDBJ databases">
        <title>A study of RAD51 homologues from Arabidopsis.</title>
        <authorList>
            <person name="Siaud N."/>
        </authorList>
    </citation>
    <scope>NUCLEOTIDE SEQUENCE [MRNA] (ISOFORM 1)</scope>
    <source>
        <strain>cv. Columbia</strain>
    </source>
</reference>
<reference key="2">
    <citation type="journal article" date="1998" name="DNA Res.">
        <title>Structural analysis of Arabidopsis thaliana chromosome 5. IV. Sequence features of the regions of 1,456,315 bp covered by nineteen physically assigned P1 and TAC clones.</title>
        <authorList>
            <person name="Sato S."/>
            <person name="Kaneko T."/>
            <person name="Kotani H."/>
            <person name="Nakamura Y."/>
            <person name="Asamizu E."/>
            <person name="Miyajima N."/>
            <person name="Tabata S."/>
        </authorList>
    </citation>
    <scope>NUCLEOTIDE SEQUENCE [LARGE SCALE GENOMIC DNA]</scope>
    <source>
        <strain>cv. Columbia</strain>
    </source>
</reference>
<reference key="3">
    <citation type="journal article" date="2017" name="Plant J.">
        <title>Araport11: a complete reannotation of the Arabidopsis thaliana reference genome.</title>
        <authorList>
            <person name="Cheng C.Y."/>
            <person name="Krishnakumar V."/>
            <person name="Chan A.P."/>
            <person name="Thibaud-Nissen F."/>
            <person name="Schobel S."/>
            <person name="Town C.D."/>
        </authorList>
    </citation>
    <scope>GENOME REANNOTATION</scope>
    <source>
        <strain>cv. Columbia</strain>
    </source>
</reference>
<reference key="4">
    <citation type="journal article" date="2002" name="Science">
        <title>Functional annotation of a full-length Arabidopsis cDNA collection.</title>
        <authorList>
            <person name="Seki M."/>
            <person name="Narusaka M."/>
            <person name="Kamiya A."/>
            <person name="Ishida J."/>
            <person name="Satou M."/>
            <person name="Sakurai T."/>
            <person name="Nakajima M."/>
            <person name="Enju A."/>
            <person name="Akiyama K."/>
            <person name="Oono Y."/>
            <person name="Muramatsu M."/>
            <person name="Hayashizaki Y."/>
            <person name="Kawai J."/>
            <person name="Carninci P."/>
            <person name="Itoh M."/>
            <person name="Ishii Y."/>
            <person name="Arakawa T."/>
            <person name="Shibata K."/>
            <person name="Shinagawa A."/>
            <person name="Shinozaki K."/>
        </authorList>
    </citation>
    <scope>NUCLEOTIDE SEQUENCE [LARGE SCALE MRNA] (ISOFORM 2)</scope>
    <source>
        <strain>cv. Columbia</strain>
    </source>
</reference>
<proteinExistence type="evidence at transcript level"/>
<keyword id="KW-0025">Alternative splicing</keyword>
<keyword id="KW-0227">DNA damage</keyword>
<keyword id="KW-0233">DNA recombination</keyword>
<keyword id="KW-0234">DNA repair</keyword>
<keyword id="KW-0238">DNA-binding</keyword>
<keyword id="KW-0539">Nucleus</keyword>
<keyword id="KW-1185">Reference proteome</keyword>
<accession>Q682D3</accession>
<accession>Q8GVF2</accession>
<accession>Q9FLG6</accession>
<sequence length="372" mass="42361">MGDDEARSWIRGDETAKQMLSRVLKDRAFLLIPPLHRVPLRAGNVVEITGASTSAKTQILIQAAISCILPKTWNGIHYGGLGKLVLFLDLDCRFDVLRLSQMLKHRLLQANWLGNGAWWQLEESNVKSCKSAEEKTKTVFDEELYASCMKRFLYVRCYDSLELLSSLKTLHYRIQQQEACGSQVGVLMIDSIGAFHWTDRLSSSLALETHNRKSLSLTNVVETIVQELKKLLLVHSLVVLATKGTIYEEKYPANENNRKVSSNDHFSGNVASKAQQPPFREFMPSSWQAFVTHKIIIRKSADYQSLQTGQQNLLAYSLEWLQPQLSRIDRFIVDDVRKLTTIKPFYSKLLLIYIVIPASSSHAVWYCHCLVT</sequence>
<name>XRCC2_ARATH</name>
<organism>
    <name type="scientific">Arabidopsis thaliana</name>
    <name type="common">Mouse-ear cress</name>
    <dbReference type="NCBI Taxonomy" id="3702"/>
    <lineage>
        <taxon>Eukaryota</taxon>
        <taxon>Viridiplantae</taxon>
        <taxon>Streptophyta</taxon>
        <taxon>Embryophyta</taxon>
        <taxon>Tracheophyta</taxon>
        <taxon>Spermatophyta</taxon>
        <taxon>Magnoliopsida</taxon>
        <taxon>eudicotyledons</taxon>
        <taxon>Gunneridae</taxon>
        <taxon>Pentapetalae</taxon>
        <taxon>rosids</taxon>
        <taxon>malvids</taxon>
        <taxon>Brassicales</taxon>
        <taxon>Brassicaceae</taxon>
        <taxon>Camelineae</taxon>
        <taxon>Arabidopsis</taxon>
    </lineage>
</organism>